<comment type="function">
    <text evidence="2">May play a role in neurotransmitter secretion.</text>
</comment>
<comment type="subcellular location">
    <subcellularLocation>
        <location>Cytoplasm</location>
        <location>Cytosol</location>
    </subcellularLocation>
    <subcellularLocation>
        <location evidence="1">Golgi apparatus membrane</location>
        <topology evidence="1">Peripheral membrane protein</topology>
    </subcellularLocation>
    <subcellularLocation>
        <location evidence="1">Cytoplasmic vesicle</location>
        <location evidence="1">Secretory vesicle membrane</location>
        <topology evidence="1">Peripheral membrane protein</topology>
    </subcellularLocation>
    <subcellularLocation>
        <location evidence="1">Cytoplasmic vesicle</location>
        <location evidence="1">Secretory vesicle</location>
        <location evidence="1">Synaptic vesicle membrane</location>
        <topology evidence="1">Peripheral membrane protein</topology>
    </subcellularLocation>
    <text evidence="1">Predominantly cytosolic. Also exists as a membrane-bound form which has been found associated with synaptic vesicles and also with the Golgi complex and immature secretory granules.</text>
</comment>
<comment type="sequence caution" evidence="5">
    <conflict type="miscellaneous discrepancy">
        <sequence resource="EMBL-CDS" id="AAH63810"/>
    </conflict>
    <text>Contaminating sequence. Potential poly-A sequence.</text>
</comment>
<evidence type="ECO:0000250" key="1"/>
<evidence type="ECO:0000250" key="2">
    <source>
        <dbReference type="UniProtKB" id="P97411"/>
    </source>
</evidence>
<evidence type="ECO:0000255" key="3">
    <source>
        <dbReference type="PROSITE-ProRule" id="PRU00294"/>
    </source>
</evidence>
<evidence type="ECO:0000256" key="4">
    <source>
        <dbReference type="SAM" id="MobiDB-lite"/>
    </source>
</evidence>
<evidence type="ECO:0000305" key="5"/>
<evidence type="ECO:0000312" key="6">
    <source>
        <dbReference type="EMBL" id="AAA64909.1"/>
    </source>
</evidence>
<evidence type="ECO:0000312" key="7">
    <source>
        <dbReference type="RGD" id="621465"/>
    </source>
</evidence>
<feature type="chain" id="PRO_0000084132" description="Islet cell autoantigen 1">
    <location>
        <begin position="1"/>
        <end position="480"/>
    </location>
</feature>
<feature type="domain" description="AH" evidence="3">
    <location>
        <begin position="50"/>
        <end position="253"/>
    </location>
</feature>
<feature type="region of interest" description="Disordered" evidence="4">
    <location>
        <begin position="276"/>
        <end position="338"/>
    </location>
</feature>
<feature type="region of interest" description="Disordered" evidence="4">
    <location>
        <begin position="400"/>
        <end position="421"/>
    </location>
</feature>
<feature type="compositionally biased region" description="Basic and acidic residues" evidence="4">
    <location>
        <begin position="276"/>
        <end position="293"/>
    </location>
</feature>
<feature type="compositionally biased region" description="Basic and acidic residues" evidence="4">
    <location>
        <begin position="306"/>
        <end position="321"/>
    </location>
</feature>
<feature type="sequence conflict" description="In Ref. 1; AAA64909." evidence="5" ref="1">
    <original>KQ</original>
    <variation>NE</variation>
    <location>
        <begin position="33"/>
        <end position="34"/>
    </location>
</feature>
<gene>
    <name evidence="7" type="primary">Ica1</name>
</gene>
<dbReference type="EMBL" id="L20900">
    <property type="protein sequence ID" value="AAA64909.1"/>
    <property type="molecule type" value="mRNA"/>
</dbReference>
<dbReference type="EMBL" id="BC063810">
    <property type="protein sequence ID" value="AAH63810.1"/>
    <property type="status" value="ALT_SEQ"/>
    <property type="molecule type" value="mRNA"/>
</dbReference>
<dbReference type="PIR" id="I65309">
    <property type="entry name" value="I65309"/>
</dbReference>
<dbReference type="SMR" id="Q63054"/>
<dbReference type="DIP" id="DIP-60171N"/>
<dbReference type="FunCoup" id="Q63054">
    <property type="interactions" value="1393"/>
</dbReference>
<dbReference type="IntAct" id="Q63054">
    <property type="interactions" value="1"/>
</dbReference>
<dbReference type="STRING" id="10116.ENSRNOP00000075191"/>
<dbReference type="PhosphoSitePlus" id="Q63054"/>
<dbReference type="jPOST" id="Q63054"/>
<dbReference type="PaxDb" id="10116-ENSRNOP00000011651"/>
<dbReference type="UCSC" id="RGD:621465">
    <property type="organism name" value="rat"/>
</dbReference>
<dbReference type="AGR" id="RGD:621465"/>
<dbReference type="RGD" id="621465">
    <property type="gene designation" value="Ica1"/>
</dbReference>
<dbReference type="eggNOG" id="KOG3891">
    <property type="taxonomic scope" value="Eukaryota"/>
</dbReference>
<dbReference type="InParanoid" id="Q63054"/>
<dbReference type="PhylomeDB" id="Q63054"/>
<dbReference type="PRO" id="PR:Q63054"/>
<dbReference type="Proteomes" id="UP000002494">
    <property type="component" value="Unplaced"/>
</dbReference>
<dbReference type="GO" id="GO:0005829">
    <property type="term" value="C:cytosol"/>
    <property type="evidence" value="ECO:0000250"/>
    <property type="project" value="UniProtKB"/>
</dbReference>
<dbReference type="GO" id="GO:0030425">
    <property type="term" value="C:dendrite"/>
    <property type="evidence" value="ECO:0000314"/>
    <property type="project" value="RGD"/>
</dbReference>
<dbReference type="GO" id="GO:0005794">
    <property type="term" value="C:Golgi apparatus"/>
    <property type="evidence" value="ECO:0000318"/>
    <property type="project" value="GO_Central"/>
</dbReference>
<dbReference type="GO" id="GO:0000139">
    <property type="term" value="C:Golgi membrane"/>
    <property type="evidence" value="ECO:0000314"/>
    <property type="project" value="RGD"/>
</dbReference>
<dbReference type="GO" id="GO:0005795">
    <property type="term" value="C:Golgi stack"/>
    <property type="evidence" value="ECO:0000314"/>
    <property type="project" value="RGD"/>
</dbReference>
<dbReference type="GO" id="GO:0048471">
    <property type="term" value="C:perinuclear region of cytoplasm"/>
    <property type="evidence" value="ECO:0000314"/>
    <property type="project" value="RGD"/>
</dbReference>
<dbReference type="GO" id="GO:0030667">
    <property type="term" value="C:secretory granule membrane"/>
    <property type="evidence" value="ECO:0000250"/>
    <property type="project" value="UniProtKB"/>
</dbReference>
<dbReference type="GO" id="GO:0030672">
    <property type="term" value="C:synaptic vesicle membrane"/>
    <property type="evidence" value="ECO:0000250"/>
    <property type="project" value="UniProtKB"/>
</dbReference>
<dbReference type="GO" id="GO:0140090">
    <property type="term" value="F:membrane curvature sensor activity"/>
    <property type="evidence" value="ECO:0000266"/>
    <property type="project" value="RGD"/>
</dbReference>
<dbReference type="GO" id="GO:0019904">
    <property type="term" value="F:protein domain specific binding"/>
    <property type="evidence" value="ECO:0000315"/>
    <property type="project" value="RGD"/>
</dbReference>
<dbReference type="GO" id="GO:0006836">
    <property type="term" value="P:neurotransmitter transport"/>
    <property type="evidence" value="ECO:0007669"/>
    <property type="project" value="UniProtKB-KW"/>
</dbReference>
<dbReference type="GO" id="GO:0043254">
    <property type="term" value="P:regulation of protein-containing complex assembly"/>
    <property type="evidence" value="ECO:0000315"/>
    <property type="project" value="RGD"/>
</dbReference>
<dbReference type="GO" id="GO:0051049">
    <property type="term" value="P:regulation of transport"/>
    <property type="evidence" value="ECO:0000318"/>
    <property type="project" value="GO_Central"/>
</dbReference>
<dbReference type="CDD" id="cd07661">
    <property type="entry name" value="BAR_ICA69"/>
    <property type="match status" value="1"/>
</dbReference>
<dbReference type="FunFam" id="1.20.1270.60:FF:000015">
    <property type="entry name" value="Islet cell autoantigen 1, 69kDa"/>
    <property type="match status" value="1"/>
</dbReference>
<dbReference type="Gene3D" id="1.20.1270.60">
    <property type="entry name" value="Arfaptin homology (AH) domain/BAR domain"/>
    <property type="match status" value="1"/>
</dbReference>
<dbReference type="InterPro" id="IPR027267">
    <property type="entry name" value="AH/BAR_dom_sf"/>
</dbReference>
<dbReference type="InterPro" id="IPR010504">
    <property type="entry name" value="AH_dom"/>
</dbReference>
<dbReference type="InterPro" id="IPR024114">
    <property type="entry name" value="Islet_autoAg_Ica1/Ica1-like"/>
</dbReference>
<dbReference type="InterPro" id="IPR006723">
    <property type="entry name" value="Islet_autoAg_Ica1_C"/>
</dbReference>
<dbReference type="PANTHER" id="PTHR10164">
    <property type="entry name" value="ISLET CELL AUTOANTIGEN 1"/>
    <property type="match status" value="1"/>
</dbReference>
<dbReference type="PANTHER" id="PTHR10164:SF3">
    <property type="entry name" value="ISLET CELL AUTOANTIGEN 1"/>
    <property type="match status" value="1"/>
</dbReference>
<dbReference type="Pfam" id="PF06456">
    <property type="entry name" value="Arfaptin"/>
    <property type="match status" value="1"/>
</dbReference>
<dbReference type="Pfam" id="PF04629">
    <property type="entry name" value="ICA69"/>
    <property type="match status" value="2"/>
</dbReference>
<dbReference type="SMART" id="SM01015">
    <property type="entry name" value="Arfaptin"/>
    <property type="match status" value="1"/>
</dbReference>
<dbReference type="SMART" id="SM01237">
    <property type="entry name" value="ICA69"/>
    <property type="match status" value="1"/>
</dbReference>
<dbReference type="SUPFAM" id="SSF103657">
    <property type="entry name" value="BAR/IMD domain-like"/>
    <property type="match status" value="1"/>
</dbReference>
<dbReference type="PROSITE" id="PS50870">
    <property type="entry name" value="AH"/>
    <property type="match status" value="1"/>
</dbReference>
<accession>Q63054</accession>
<accession>Q6P3W0</accession>
<sequence>MSGHKCYSWELQDRFAQDKSVVNKMQQKYWETKQAFIKATGKKEDEHVVASDADLDAKLELFHSIQRTCLDLSKAIVLYQKRICFLSQEENELGKFLRSQGFQDKTRAGKMMQATGKALCFSSQQRLALRNPLCRFHQEVETFRHRAISDTWLTVNRMEQCRTEYRGALLWMKDVSQELDPDLYKQMEKFRKVQTQVRLAKKNFDKLKMDVCQKVDLLGASRCNLLSHMLATYQTTLLHFWEKTSHTMAAIHESFKGYQPYEFTTLKSLQDPMKKLVEKEKKKSSRRENREAVAQEPRQLISLEEENQHKESSTCQKEEGKSVPSSVDKSSADDACSGPIDELLDVKPEEACLGPMAGTPEPESGDKDDLLLLNEIFSTSSLDEGEFSREWAAVFGDDRLKEPAPMGAQGEPDPKPQIGSAFLPSQLLDQNMKDLQASLQEPAKAASDLTAWFSLFADLDPLSNPDAIGKTDKEHELLNA</sequence>
<name>ICA69_RAT</name>
<keyword id="KW-0963">Cytoplasm</keyword>
<keyword id="KW-0968">Cytoplasmic vesicle</keyword>
<keyword id="KW-0333">Golgi apparatus</keyword>
<keyword id="KW-0472">Membrane</keyword>
<keyword id="KW-0532">Neurotransmitter transport</keyword>
<keyword id="KW-1185">Reference proteome</keyword>
<keyword id="KW-0770">Synapse</keyword>
<keyword id="KW-0813">Transport</keyword>
<organism>
    <name type="scientific">Rattus norvegicus</name>
    <name type="common">Rat</name>
    <dbReference type="NCBI Taxonomy" id="10116"/>
    <lineage>
        <taxon>Eukaryota</taxon>
        <taxon>Metazoa</taxon>
        <taxon>Chordata</taxon>
        <taxon>Craniata</taxon>
        <taxon>Vertebrata</taxon>
        <taxon>Euteleostomi</taxon>
        <taxon>Mammalia</taxon>
        <taxon>Eutheria</taxon>
        <taxon>Euarchontoglires</taxon>
        <taxon>Glires</taxon>
        <taxon>Rodentia</taxon>
        <taxon>Myomorpha</taxon>
        <taxon>Muroidea</taxon>
        <taxon>Muridae</taxon>
        <taxon>Murinae</taxon>
        <taxon>Rattus</taxon>
    </lineage>
</organism>
<protein>
    <recommendedName>
        <fullName>Islet cell autoantigen 1</fullName>
    </recommendedName>
    <alternativeName>
        <fullName>69 kDa islet cell autoantigen</fullName>
        <shortName>ICA69</shortName>
    </alternativeName>
    <alternativeName>
        <fullName>Islet cell autoantigen p69</fullName>
        <shortName>ICAp69</shortName>
        <shortName>p69</shortName>
    </alternativeName>
</protein>
<reference evidence="6" key="1">
    <citation type="journal article" date="1994" name="Biochim. Biophys. Acta">
        <title>Cloning of human and rat p69 cDNA, a candidate autoimmune target in type 1 diabetes.</title>
        <authorList>
            <person name="Miyazaki I."/>
            <person name="Gaedigk R."/>
            <person name="Hui M.F."/>
            <person name="Cheung R.K."/>
            <person name="Morkowski J."/>
            <person name="Rajotte R.V."/>
            <person name="Dosch H.-M."/>
        </authorList>
    </citation>
    <scope>NUCLEOTIDE SEQUENCE [MRNA]</scope>
    <source>
        <strain evidence="6">BB</strain>
        <tissue>Pancreatic islet</tissue>
    </source>
</reference>
<reference key="2">
    <citation type="journal article" date="2004" name="Genome Res.">
        <title>The status, quality, and expansion of the NIH full-length cDNA project: the Mammalian Gene Collection (MGC).</title>
        <authorList>
            <consortium name="The MGC Project Team"/>
        </authorList>
    </citation>
    <scope>NUCLEOTIDE SEQUENCE [LARGE SCALE MRNA] OF 1-279</scope>
    <source>
        <tissue>Pituitary</tissue>
    </source>
</reference>
<proteinExistence type="evidence at transcript level"/>